<dbReference type="EC" id="2.7.1.199" evidence="1"/>
<dbReference type="EMBL" id="AP009324">
    <property type="protein sequence ID" value="BAF77071.1"/>
    <property type="molecule type" value="Genomic_DNA"/>
</dbReference>
<dbReference type="RefSeq" id="WP_001227709.1">
    <property type="nucleotide sequence ID" value="NC_009782.1"/>
</dbReference>
<dbReference type="SMR" id="A7WXI2"/>
<dbReference type="KEGG" id="saw:SAHV_0188"/>
<dbReference type="HOGENOM" id="CLU_012312_1_1_9"/>
<dbReference type="GO" id="GO:0005886">
    <property type="term" value="C:plasma membrane"/>
    <property type="evidence" value="ECO:0007669"/>
    <property type="project" value="UniProtKB-SubCell"/>
</dbReference>
<dbReference type="GO" id="GO:0055056">
    <property type="term" value="F:D-glucose transmembrane transporter activity"/>
    <property type="evidence" value="ECO:0007669"/>
    <property type="project" value="InterPro"/>
</dbReference>
<dbReference type="GO" id="GO:0016301">
    <property type="term" value="F:kinase activity"/>
    <property type="evidence" value="ECO:0007669"/>
    <property type="project" value="UniProtKB-KW"/>
</dbReference>
<dbReference type="GO" id="GO:0008982">
    <property type="term" value="F:protein-N(PI)-phosphohistidine-sugar phosphotransferase activity"/>
    <property type="evidence" value="ECO:0007669"/>
    <property type="project" value="InterPro"/>
</dbReference>
<dbReference type="GO" id="GO:0090563">
    <property type="term" value="F:protein-phosphocysteine-sugar phosphotransferase activity"/>
    <property type="evidence" value="ECO:0007669"/>
    <property type="project" value="TreeGrafter"/>
</dbReference>
<dbReference type="GO" id="GO:1904659">
    <property type="term" value="P:D-glucose transmembrane transport"/>
    <property type="evidence" value="ECO:0007669"/>
    <property type="project" value="InterPro"/>
</dbReference>
<dbReference type="GO" id="GO:0009401">
    <property type="term" value="P:phosphoenolpyruvate-dependent sugar phosphotransferase system"/>
    <property type="evidence" value="ECO:0007669"/>
    <property type="project" value="UniProtKB-KW"/>
</dbReference>
<dbReference type="CDD" id="cd00210">
    <property type="entry name" value="PTS_IIA_glc"/>
    <property type="match status" value="1"/>
</dbReference>
<dbReference type="CDD" id="cd00212">
    <property type="entry name" value="PTS_IIB_glc"/>
    <property type="match status" value="1"/>
</dbReference>
<dbReference type="FunFam" id="2.70.70.10:FF:000001">
    <property type="entry name" value="PTS system glucose-specific IIA component"/>
    <property type="match status" value="1"/>
</dbReference>
<dbReference type="FunFam" id="3.30.1360.60:FF:000001">
    <property type="entry name" value="PTS system glucose-specific IIBC component PtsG"/>
    <property type="match status" value="1"/>
</dbReference>
<dbReference type="Gene3D" id="2.70.70.10">
    <property type="entry name" value="Glucose Permease (Domain IIA)"/>
    <property type="match status" value="1"/>
</dbReference>
<dbReference type="Gene3D" id="3.30.1360.60">
    <property type="entry name" value="Glucose permease domain IIB"/>
    <property type="match status" value="1"/>
</dbReference>
<dbReference type="InterPro" id="IPR011055">
    <property type="entry name" value="Dup_hybrid_motif"/>
</dbReference>
<dbReference type="InterPro" id="IPR036878">
    <property type="entry name" value="Glu_permease_IIB"/>
</dbReference>
<dbReference type="InterPro" id="IPR018113">
    <property type="entry name" value="PTrfase_EIIB_Cys"/>
</dbReference>
<dbReference type="InterPro" id="IPR001127">
    <property type="entry name" value="PTS_EIIA_1_perm"/>
</dbReference>
<dbReference type="InterPro" id="IPR003352">
    <property type="entry name" value="PTS_EIIC"/>
</dbReference>
<dbReference type="InterPro" id="IPR013013">
    <property type="entry name" value="PTS_EIIC_1"/>
</dbReference>
<dbReference type="InterPro" id="IPR050429">
    <property type="entry name" value="PTS_Glucose_EIICBA"/>
</dbReference>
<dbReference type="InterPro" id="IPR001996">
    <property type="entry name" value="PTS_IIB_1"/>
</dbReference>
<dbReference type="InterPro" id="IPR011299">
    <property type="entry name" value="PTS_IIBC_glc"/>
</dbReference>
<dbReference type="NCBIfam" id="TIGR00826">
    <property type="entry name" value="EIIB_glc"/>
    <property type="match status" value="1"/>
</dbReference>
<dbReference type="NCBIfam" id="TIGR00830">
    <property type="entry name" value="PTBA"/>
    <property type="match status" value="1"/>
</dbReference>
<dbReference type="NCBIfam" id="TIGR02002">
    <property type="entry name" value="PTS-II-BC-glcB"/>
    <property type="match status" value="1"/>
</dbReference>
<dbReference type="PANTHER" id="PTHR30009">
    <property type="entry name" value="CYTOCHROME C-TYPE SYNTHESIS PROTEIN AND PTS TRANSMEMBRANE COMPONENT"/>
    <property type="match status" value="1"/>
</dbReference>
<dbReference type="PANTHER" id="PTHR30009:SF20">
    <property type="entry name" value="PTS SYSTEM GLUCOSE-SPECIFIC EIICB COMPONENT-RELATED"/>
    <property type="match status" value="1"/>
</dbReference>
<dbReference type="Pfam" id="PF00358">
    <property type="entry name" value="PTS_EIIA_1"/>
    <property type="match status" value="1"/>
</dbReference>
<dbReference type="Pfam" id="PF00367">
    <property type="entry name" value="PTS_EIIB"/>
    <property type="match status" value="1"/>
</dbReference>
<dbReference type="Pfam" id="PF02378">
    <property type="entry name" value="PTS_EIIC"/>
    <property type="match status" value="1"/>
</dbReference>
<dbReference type="SUPFAM" id="SSF51261">
    <property type="entry name" value="Duplicated hybrid motif"/>
    <property type="match status" value="1"/>
</dbReference>
<dbReference type="SUPFAM" id="SSF55604">
    <property type="entry name" value="Glucose permease domain IIB"/>
    <property type="match status" value="1"/>
</dbReference>
<dbReference type="PROSITE" id="PS51093">
    <property type="entry name" value="PTS_EIIA_TYPE_1"/>
    <property type="match status" value="1"/>
</dbReference>
<dbReference type="PROSITE" id="PS00371">
    <property type="entry name" value="PTS_EIIA_TYPE_1_HIS"/>
    <property type="match status" value="1"/>
</dbReference>
<dbReference type="PROSITE" id="PS51098">
    <property type="entry name" value="PTS_EIIB_TYPE_1"/>
    <property type="match status" value="1"/>
</dbReference>
<dbReference type="PROSITE" id="PS01035">
    <property type="entry name" value="PTS_EIIB_TYPE_1_CYS"/>
    <property type="match status" value="1"/>
</dbReference>
<dbReference type="PROSITE" id="PS51103">
    <property type="entry name" value="PTS_EIIC_TYPE_1"/>
    <property type="match status" value="1"/>
</dbReference>
<feature type="chain" id="PRO_0000351389" description="PTS system glucose-specific EIICBA component">
    <location>
        <begin position="1"/>
        <end position="681"/>
    </location>
</feature>
<feature type="transmembrane region" description="Helical" evidence="4">
    <location>
        <begin position="16"/>
        <end position="36"/>
    </location>
</feature>
<feature type="transmembrane region" description="Helical" evidence="4">
    <location>
        <begin position="73"/>
        <end position="93"/>
    </location>
</feature>
<feature type="transmembrane region" description="Helical" evidence="4">
    <location>
        <begin position="126"/>
        <end position="146"/>
    </location>
</feature>
<feature type="transmembrane region" description="Helical" evidence="4">
    <location>
        <begin position="170"/>
        <end position="190"/>
    </location>
</feature>
<feature type="transmembrane region" description="Helical" evidence="4">
    <location>
        <begin position="199"/>
        <end position="219"/>
    </location>
</feature>
<feature type="transmembrane region" description="Helical" evidence="4">
    <location>
        <begin position="273"/>
        <end position="293"/>
    </location>
</feature>
<feature type="transmembrane region" description="Helical" evidence="4">
    <location>
        <begin position="303"/>
        <end position="323"/>
    </location>
</feature>
<feature type="transmembrane region" description="Helical" evidence="4">
    <location>
        <begin position="328"/>
        <end position="348"/>
    </location>
</feature>
<feature type="transmembrane region" description="Helical" evidence="4">
    <location>
        <begin position="355"/>
        <end position="375"/>
    </location>
</feature>
<feature type="transmembrane region" description="Helical" evidence="4">
    <location>
        <begin position="383"/>
        <end position="403"/>
    </location>
</feature>
<feature type="domain" description="PTS EIIC type-1" evidence="4">
    <location>
        <begin position="3"/>
        <end position="414"/>
    </location>
</feature>
<feature type="domain" description="PTS EIIB type-1" evidence="3">
    <location>
        <begin position="425"/>
        <end position="506"/>
    </location>
</feature>
<feature type="domain" description="PTS EIIA type-1" evidence="2">
    <location>
        <begin position="551"/>
        <end position="655"/>
    </location>
</feature>
<feature type="active site" description="Phosphocysteine intermediate; for EIIB activity" evidence="3">
    <location>
        <position position="447"/>
    </location>
</feature>
<feature type="active site" description="Tele-phosphohistidine intermediate; for EIIA activity" evidence="2">
    <location>
        <position position="603"/>
    </location>
</feature>
<accession>A7WXI2</accession>
<name>PTG3C_STAA1</name>
<protein>
    <recommendedName>
        <fullName evidence="1">PTS system glucose-specific EIICBA component</fullName>
        <ecNumber evidence="1">2.7.1.199</ecNumber>
    </recommendedName>
    <alternativeName>
        <fullName evidence="1">EIICBA-Glc</fullName>
        <shortName evidence="1">EII-Glc</shortName>
    </alternativeName>
    <alternativeName>
        <fullName evidence="5">EIICBA-Glc 1</fullName>
    </alternativeName>
    <domain>
        <recommendedName>
            <fullName evidence="1">Glucose permease IIC component</fullName>
        </recommendedName>
        <alternativeName>
            <fullName evidence="1">PTS system glucose-specific EIIC component</fullName>
        </alternativeName>
    </domain>
    <domain>
        <recommendedName>
            <fullName evidence="1">Glucose-specific phosphotransferase enzyme IIB component</fullName>
        </recommendedName>
        <alternativeName>
            <fullName evidence="1">PTS system glucose-specific EIIB component</fullName>
        </alternativeName>
    </domain>
    <domain>
        <recommendedName>
            <fullName evidence="1">Glucose-specific phosphotransferase enzyme IIA component</fullName>
        </recommendedName>
        <alternativeName>
            <fullName evidence="1">PTS system glucose-specific EIIA component</fullName>
        </alternativeName>
    </domain>
</protein>
<evidence type="ECO:0000250" key="1">
    <source>
        <dbReference type="UniProtKB" id="Q57071"/>
    </source>
</evidence>
<evidence type="ECO:0000255" key="2">
    <source>
        <dbReference type="PROSITE-ProRule" id="PRU00416"/>
    </source>
</evidence>
<evidence type="ECO:0000255" key="3">
    <source>
        <dbReference type="PROSITE-ProRule" id="PRU00421"/>
    </source>
</evidence>
<evidence type="ECO:0000255" key="4">
    <source>
        <dbReference type="PROSITE-ProRule" id="PRU00426"/>
    </source>
</evidence>
<evidence type="ECO:0000305" key="5"/>
<sequence length="681" mass="73958">MRKKLFGQLQRIGKALMLPVAILPAAGLLLAIGTAIQGEALQHYLPFIQNGGVQNVAKLMTAAGSIIFENLPMIFALGVAIGLAGGDGVAAIAAFVGYIIMNKTMGDFLQVTPKNVTDPASGYASILGIPTLQTGVFGGIIIGALAAWCYNKFYNINLPSYLGFFAGKRFVPIMMATTSFILAFPMALIWPTIQSGLNAFSTGLLDSNTGVAVFLFGFIKRLLIPFGLHHIFHAPFWFEFGSWKNAAGEIIHGDQRIFIEQIREGAHLTAGKFMQGEFPVMMFGLPAAALAIYHTAKPENKKVVAGLMGSAALTSFLTGITEPLEFSFLFVAPLLFFIHAVLDGLSFLTLYLLDVHLGYTFSGGFIDYVLLGVLPNKTQWWLVIPVGLVYAVIYYFVFRFLIVKLKYKTPGREDKQSQAVTASATELPYAVLEAMGGKANIKHLDACITRLRVEVNDKSKVDVPGLKDLGASGVLEVGNNMQAIFGPKSDQIKHEMQQIMNGQVVENPTTMEDDKDETVVVAEDKSATSELSHIVHAPLTGEVTPLSEVPDQVFSEKMMGDGIAIKPSQGEVRAPFNGKIQMIFPTKHAIGLVSDSGLELLIHIGLDTVKLNGEGFTLHVEEGQEVKQGDLLINFDLDYIRNHAKSDITPIIVTQGNITNLDFKQGEHGNISFGDQLFEAK</sequence>
<gene>
    <name type="primary">ptsG</name>
    <name type="synonym">glcA</name>
    <name type="ordered locus">SAHV_0188</name>
</gene>
<reference key="1">
    <citation type="journal article" date="2008" name="Antimicrob. Agents Chemother.">
        <title>Mutated response regulator graR is responsible for phenotypic conversion of Staphylococcus aureus from heterogeneous vancomycin-intermediate resistance to vancomycin-intermediate resistance.</title>
        <authorList>
            <person name="Neoh H.-M."/>
            <person name="Cui L."/>
            <person name="Yuzawa H."/>
            <person name="Takeuchi F."/>
            <person name="Matsuo M."/>
            <person name="Hiramatsu K."/>
        </authorList>
    </citation>
    <scope>NUCLEOTIDE SEQUENCE [LARGE SCALE GENOMIC DNA]</scope>
    <source>
        <strain>Mu3 / ATCC 700698</strain>
    </source>
</reference>
<organism>
    <name type="scientific">Staphylococcus aureus (strain Mu3 / ATCC 700698)</name>
    <dbReference type="NCBI Taxonomy" id="418127"/>
    <lineage>
        <taxon>Bacteria</taxon>
        <taxon>Bacillati</taxon>
        <taxon>Bacillota</taxon>
        <taxon>Bacilli</taxon>
        <taxon>Bacillales</taxon>
        <taxon>Staphylococcaceae</taxon>
        <taxon>Staphylococcus</taxon>
    </lineage>
</organism>
<proteinExistence type="inferred from homology"/>
<keyword id="KW-1003">Cell membrane</keyword>
<keyword id="KW-0418">Kinase</keyword>
<keyword id="KW-0472">Membrane</keyword>
<keyword id="KW-0598">Phosphotransferase system</keyword>
<keyword id="KW-0762">Sugar transport</keyword>
<keyword id="KW-0808">Transferase</keyword>
<keyword id="KW-0812">Transmembrane</keyword>
<keyword id="KW-1133">Transmembrane helix</keyword>
<keyword id="KW-0813">Transport</keyword>
<comment type="function">
    <text evidence="1">The phosphoenolpyruvate-dependent sugar phosphotransferase system (sugar PTS), a major carbohydrate active transport system, catalyzes the phosphorylation of incoming sugar substrates concomitantly with their translocation across the cell membrane. This system is involved in glucose transport.</text>
</comment>
<comment type="catalytic activity">
    <reaction evidence="1">
        <text>N(pros)-phospho-L-histidyl-[protein] + D-glucose(out) = D-glucose 6-phosphate(in) + L-histidyl-[protein]</text>
        <dbReference type="Rhea" id="RHEA:33367"/>
        <dbReference type="Rhea" id="RHEA-COMP:9745"/>
        <dbReference type="Rhea" id="RHEA-COMP:9746"/>
        <dbReference type="ChEBI" id="CHEBI:4167"/>
        <dbReference type="ChEBI" id="CHEBI:29979"/>
        <dbReference type="ChEBI" id="CHEBI:61548"/>
        <dbReference type="ChEBI" id="CHEBI:64837"/>
        <dbReference type="EC" id="2.7.1.199"/>
    </reaction>
</comment>
<comment type="subcellular location">
    <subcellularLocation>
        <location evidence="4">Cell membrane</location>
        <topology evidence="4">Multi-pass membrane protein</topology>
    </subcellularLocation>
</comment>
<comment type="domain">
    <text evidence="4">The EIIC domain forms the PTS system translocation channel and contains the specific substrate-binding site.</text>
</comment>
<comment type="domain">
    <text evidence="3">The EIIB domain is phosphorylated by phospho-EIIA on a cysteinyl or histidyl residue, depending on the transported sugar. Then, it transfers the phosphoryl group to the sugar substrate concomitantly with the sugar uptake processed by the EIIC domain.</text>
</comment>
<comment type="domain">
    <text evidence="2">The EIIA domain is phosphorylated by phospho-HPr on a histidyl residue. Then, it transfers the phosphoryl group to the EIIB domain.</text>
</comment>